<sequence>MVTLLPIEGQEIHFFEILESECVLYTGWIERASGSSIYPEAKARLPLEALLGSNKEPMLPKETVLSLKRYNLGSSAMKRNVPGHVLQRPSYLTRIQVTLLCNSSAEAL</sequence>
<organism>
    <name type="scientific">Homo sapiens</name>
    <name type="common">Human</name>
    <dbReference type="NCBI Taxonomy" id="9606"/>
    <lineage>
        <taxon>Eukaryota</taxon>
        <taxon>Metazoa</taxon>
        <taxon>Chordata</taxon>
        <taxon>Craniata</taxon>
        <taxon>Vertebrata</taxon>
        <taxon>Euteleostomi</taxon>
        <taxon>Mammalia</taxon>
        <taxon>Eutheria</taxon>
        <taxon>Euarchontoglires</taxon>
        <taxon>Primates</taxon>
        <taxon>Haplorrhini</taxon>
        <taxon>Catarrhini</taxon>
        <taxon>Hominidae</taxon>
        <taxon>Homo</taxon>
    </lineage>
</organism>
<comment type="function">
    <text evidence="1">Functions as a proapoptotic molecule through the caspase-dependent mitochondrial pathway of cell death.</text>
</comment>
<comment type="subcellular location">
    <subcellularLocation>
        <location evidence="1">Cytoplasm</location>
    </subcellularLocation>
    <subcellularLocation>
        <location evidence="1">Mitochondrion</location>
    </subcellularLocation>
    <text>Lower abundance in mitochondrion than in cytoplasm.</text>
</comment>
<comment type="tissue specificity">
    <text evidence="1">Ubiquitously expressed.</text>
</comment>
<evidence type="ECO:0000269" key="1">
    <source>
    </source>
</evidence>
<evidence type="ECO:0000305" key="2"/>
<proteinExistence type="evidence at protein level"/>
<dbReference type="EMBL" id="AF303179">
    <property type="protein sequence ID" value="AAN31127.1"/>
    <property type="molecule type" value="mRNA"/>
</dbReference>
<dbReference type="EMBL" id="BC130361">
    <property type="protein sequence ID" value="AAI30362.1"/>
    <property type="molecule type" value="mRNA"/>
</dbReference>
<dbReference type="EMBL" id="BC130363">
    <property type="protein sequence ID" value="AAI30364.1"/>
    <property type="molecule type" value="mRNA"/>
</dbReference>
<dbReference type="CCDS" id="CCDS31693.1"/>
<dbReference type="RefSeq" id="NP_001001786.2">
    <property type="nucleotide sequence ID" value="NM_001001786.3"/>
</dbReference>
<dbReference type="BioGRID" id="136097">
    <property type="interactions" value="12"/>
</dbReference>
<dbReference type="IntAct" id="Q8IZY5">
    <property type="interactions" value="9"/>
</dbReference>
<dbReference type="MINT" id="Q8IZY5"/>
<dbReference type="STRING" id="9606.ENSP00000453153"/>
<dbReference type="iPTMnet" id="Q8IZY5"/>
<dbReference type="PhosphoSitePlus" id="Q8IZY5"/>
<dbReference type="BioMuta" id="BLID"/>
<dbReference type="PaxDb" id="9606-ENSP00000453153"/>
<dbReference type="ProteomicsDB" id="71443"/>
<dbReference type="Antibodypedia" id="55634">
    <property type="antibodies" value="65 antibodies from 16 providers"/>
</dbReference>
<dbReference type="DNASU" id="414899"/>
<dbReference type="Ensembl" id="ENST00000560104.2">
    <property type="protein sequence ID" value="ENSP00000453153.1"/>
    <property type="gene ID" value="ENSG00000259571.2"/>
</dbReference>
<dbReference type="GeneID" id="414899"/>
<dbReference type="KEGG" id="hsa:414899"/>
<dbReference type="MANE-Select" id="ENST00000560104.2">
    <property type="protein sequence ID" value="ENSP00000453153.1"/>
    <property type="RefSeq nucleotide sequence ID" value="NM_001001786.3"/>
    <property type="RefSeq protein sequence ID" value="NP_001001786.2"/>
</dbReference>
<dbReference type="UCSC" id="uc001pyf.3">
    <property type="organism name" value="human"/>
</dbReference>
<dbReference type="AGR" id="HGNC:33495"/>
<dbReference type="CTD" id="414899"/>
<dbReference type="DisGeNET" id="414899"/>
<dbReference type="GeneCards" id="BLID"/>
<dbReference type="HGNC" id="HGNC:33495">
    <property type="gene designation" value="BLID"/>
</dbReference>
<dbReference type="HPA" id="ENSG00000259571">
    <property type="expression patterns" value="Not detected"/>
</dbReference>
<dbReference type="MIM" id="608853">
    <property type="type" value="gene"/>
</dbReference>
<dbReference type="neXtProt" id="NX_Q8IZY5"/>
<dbReference type="OpenTargets" id="ENSG00000259571"/>
<dbReference type="PharmGKB" id="PA162377555"/>
<dbReference type="VEuPathDB" id="HostDB:ENSG00000259571"/>
<dbReference type="eggNOG" id="ENOG502TGWD">
    <property type="taxonomic scope" value="Eukaryota"/>
</dbReference>
<dbReference type="GeneTree" id="ENSGT00520000061087"/>
<dbReference type="HOGENOM" id="CLU_2202905_0_0_1"/>
<dbReference type="InParanoid" id="Q8IZY5"/>
<dbReference type="OMA" id="GSNKEPM"/>
<dbReference type="OrthoDB" id="9537731at2759"/>
<dbReference type="PAN-GO" id="Q8IZY5">
    <property type="GO annotations" value="0 GO annotations based on evolutionary models"/>
</dbReference>
<dbReference type="PathwayCommons" id="Q8IZY5"/>
<dbReference type="SignaLink" id="Q8IZY5"/>
<dbReference type="BioGRID-ORCS" id="414899">
    <property type="hits" value="7 hits in 1135 CRISPR screens"/>
</dbReference>
<dbReference type="GenomeRNAi" id="414899"/>
<dbReference type="Pharos" id="Q8IZY5">
    <property type="development level" value="Tbio"/>
</dbReference>
<dbReference type="PRO" id="PR:Q8IZY5"/>
<dbReference type="Proteomes" id="UP000005640">
    <property type="component" value="Chromosome 11"/>
</dbReference>
<dbReference type="RNAct" id="Q8IZY5">
    <property type="molecule type" value="protein"/>
</dbReference>
<dbReference type="Bgee" id="ENSG00000259571">
    <property type="expression patterns" value="Expressed in cartilage tissue and 26 other cell types or tissues"/>
</dbReference>
<dbReference type="GO" id="GO:0005829">
    <property type="term" value="C:cytosol"/>
    <property type="evidence" value="ECO:0000314"/>
    <property type="project" value="HPA"/>
</dbReference>
<dbReference type="GO" id="GO:0005739">
    <property type="term" value="C:mitochondrion"/>
    <property type="evidence" value="ECO:0000315"/>
    <property type="project" value="UniProtKB"/>
</dbReference>
<dbReference type="GO" id="GO:0006915">
    <property type="term" value="P:apoptotic process"/>
    <property type="evidence" value="ECO:0007669"/>
    <property type="project" value="UniProtKB-KW"/>
</dbReference>
<dbReference type="GO" id="GO:0043065">
    <property type="term" value="P:positive regulation of apoptotic process"/>
    <property type="evidence" value="ECO:0000315"/>
    <property type="project" value="UniProtKB"/>
</dbReference>
<feature type="chain" id="PRO_0000301669" description="BH3-like motif-containing cell death inducer">
    <location>
        <begin position="1"/>
        <end position="108"/>
    </location>
</feature>
<feature type="short sequence motif" description="BH3-like">
    <location>
        <begin position="5"/>
        <end position="12"/>
    </location>
</feature>
<feature type="sequence variant" id="VAR_056750" description="In dbSNP:rs7116084.">
    <original>A</original>
    <variation>D</variation>
    <location>
        <position position="76"/>
    </location>
</feature>
<feature type="mutagenesis site" description="Fails to induce apoptosis." evidence="1">
    <original>L</original>
    <variation>E</variation>
    <location>
        <position position="5"/>
    </location>
</feature>
<feature type="sequence conflict" description="In Ref. 1; AAN31127." evidence="2" ref="1">
    <original>I</original>
    <variation>V</variation>
    <location>
        <position position="12"/>
    </location>
</feature>
<keyword id="KW-0053">Apoptosis</keyword>
<keyword id="KW-0963">Cytoplasm</keyword>
<keyword id="KW-0496">Mitochondrion</keyword>
<keyword id="KW-1185">Reference proteome</keyword>
<accession>Q8IZY5</accession>
<accession>A1L416</accession>
<reference key="1">
    <citation type="journal article" date="2004" name="J. Biol. Chem.">
        <title>BRCC2, a novel BH3-like domain-containing protein, induces apoptosis in a caspase-dependent manner.</title>
        <authorList>
            <person name="Broustas C.G."/>
            <person name="Gokhale P.C."/>
            <person name="Rahman A."/>
            <person name="Dritschilo A."/>
            <person name="Ahmad I."/>
            <person name="Kasid U."/>
        </authorList>
    </citation>
    <scope>NUCLEOTIDE SEQUENCE [MRNA]</scope>
    <scope>FUNCTION</scope>
    <scope>SUBCELLULAR LOCATION</scope>
    <scope>TISSUE SPECIFICITY</scope>
    <scope>MUTAGENESIS OF LEU-5</scope>
    <source>
        <tissue>Mammary cancer</tissue>
    </source>
</reference>
<reference key="2">
    <citation type="journal article" date="2004" name="Genome Res.">
        <title>The status, quality, and expansion of the NIH full-length cDNA project: the Mammalian Gene Collection (MGC).</title>
        <authorList>
            <consortium name="The MGC Project Team"/>
        </authorList>
    </citation>
    <scope>NUCLEOTIDE SEQUENCE [LARGE SCALE MRNA]</scope>
</reference>
<name>BLID_HUMAN</name>
<protein>
    <recommendedName>
        <fullName>BH3-like motif-containing cell death inducer</fullName>
    </recommendedName>
    <alternativeName>
        <fullName>Breast cancer cell protein 2</fullName>
    </alternativeName>
</protein>
<gene>
    <name type="primary">BLID</name>
    <name type="synonym">BRCC2</name>
</gene>